<proteinExistence type="inferred from homology"/>
<keyword id="KW-0520">NAD</keyword>
<keyword id="KW-0560">Oxidoreductase</keyword>
<organism>
    <name type="scientific">Staphylococcus aureus (strain MRSA252)</name>
    <dbReference type="NCBI Taxonomy" id="282458"/>
    <lineage>
        <taxon>Bacteria</taxon>
        <taxon>Bacillati</taxon>
        <taxon>Bacillota</taxon>
        <taxon>Bacilli</taxon>
        <taxon>Bacillales</taxon>
        <taxon>Staphylococcaceae</taxon>
        <taxon>Staphylococcus</taxon>
    </lineage>
</organism>
<comment type="function">
    <text evidence="1">Catalyzes the irreversible reduction of 2,3-butanediol to (S)-acetoin in the presence of NADH.</text>
</comment>
<comment type="catalytic activity">
    <reaction>
        <text>(S)-acetoin + NAD(+) = diacetyl + NADH + H(+)</text>
        <dbReference type="Rhea" id="RHEA:27286"/>
        <dbReference type="ChEBI" id="CHEBI:15378"/>
        <dbReference type="ChEBI" id="CHEBI:15687"/>
        <dbReference type="ChEBI" id="CHEBI:16583"/>
        <dbReference type="ChEBI" id="CHEBI:57540"/>
        <dbReference type="ChEBI" id="CHEBI:57945"/>
        <dbReference type="EC" id="1.1.1.304"/>
    </reaction>
</comment>
<comment type="similarity">
    <text evidence="3">Belongs to the short-chain dehydrogenases/reductases (SDR) family.</text>
</comment>
<name>BUTA_STAAR</name>
<reference key="1">
    <citation type="journal article" date="2004" name="Proc. Natl. Acad. Sci. U.S.A.">
        <title>Complete genomes of two clinical Staphylococcus aureus strains: evidence for the rapid evolution of virulence and drug resistance.</title>
        <authorList>
            <person name="Holden M.T.G."/>
            <person name="Feil E.J."/>
            <person name="Lindsay J.A."/>
            <person name="Peacock S.J."/>
            <person name="Day N.P.J."/>
            <person name="Enright M.C."/>
            <person name="Foster T.J."/>
            <person name="Moore C.E."/>
            <person name="Hurst L."/>
            <person name="Atkin R."/>
            <person name="Barron A."/>
            <person name="Bason N."/>
            <person name="Bentley S.D."/>
            <person name="Chillingworth C."/>
            <person name="Chillingworth T."/>
            <person name="Churcher C."/>
            <person name="Clark L."/>
            <person name="Corton C."/>
            <person name="Cronin A."/>
            <person name="Doggett J."/>
            <person name="Dowd L."/>
            <person name="Feltwell T."/>
            <person name="Hance Z."/>
            <person name="Harris B."/>
            <person name="Hauser H."/>
            <person name="Holroyd S."/>
            <person name="Jagels K."/>
            <person name="James K.D."/>
            <person name="Lennard N."/>
            <person name="Line A."/>
            <person name="Mayes R."/>
            <person name="Moule S."/>
            <person name="Mungall K."/>
            <person name="Ormond D."/>
            <person name="Quail M.A."/>
            <person name="Rabbinowitsch E."/>
            <person name="Rutherford K.M."/>
            <person name="Sanders M."/>
            <person name="Sharp S."/>
            <person name="Simmonds M."/>
            <person name="Stevens K."/>
            <person name="Whitehead S."/>
            <person name="Barrell B.G."/>
            <person name="Spratt B.G."/>
            <person name="Parkhill J."/>
        </authorList>
    </citation>
    <scope>NUCLEOTIDE SEQUENCE [LARGE SCALE GENOMIC DNA]</scope>
    <source>
        <strain>MRSA252</strain>
    </source>
</reference>
<gene>
    <name type="primary">butA</name>
    <name type="ordered locus">SAR0129</name>
</gene>
<dbReference type="EC" id="1.1.1.304"/>
<dbReference type="EMBL" id="BX571856">
    <property type="protein sequence ID" value="CAG39155.1"/>
    <property type="molecule type" value="Genomic_DNA"/>
</dbReference>
<dbReference type="RefSeq" id="WP_000183771.1">
    <property type="nucleotide sequence ID" value="NC_002952.2"/>
</dbReference>
<dbReference type="SMR" id="Q6GKH9"/>
<dbReference type="KEGG" id="sar:SAR0129"/>
<dbReference type="HOGENOM" id="CLU_010194_1_0_9"/>
<dbReference type="Proteomes" id="UP000000596">
    <property type="component" value="Chromosome"/>
</dbReference>
<dbReference type="GO" id="GO:0052588">
    <property type="term" value="F:diacetyl reductase ((S)-acetoin forming) (NAD+) activity"/>
    <property type="evidence" value="ECO:0007669"/>
    <property type="project" value="UniProtKB-EC"/>
</dbReference>
<dbReference type="GO" id="GO:0045150">
    <property type="term" value="P:acetoin catabolic process"/>
    <property type="evidence" value="ECO:0007669"/>
    <property type="project" value="InterPro"/>
</dbReference>
<dbReference type="CDD" id="cd05366">
    <property type="entry name" value="meso-BDH-like_SDR_c"/>
    <property type="match status" value="1"/>
</dbReference>
<dbReference type="FunFam" id="3.40.50.720:FF:000084">
    <property type="entry name" value="Short-chain dehydrogenase reductase"/>
    <property type="match status" value="1"/>
</dbReference>
<dbReference type="Gene3D" id="3.40.50.720">
    <property type="entry name" value="NAD(P)-binding Rossmann-like Domain"/>
    <property type="match status" value="1"/>
</dbReference>
<dbReference type="InterPro" id="IPR014007">
    <property type="entry name" value="23BDH"/>
</dbReference>
<dbReference type="InterPro" id="IPR036291">
    <property type="entry name" value="NAD(P)-bd_dom_sf"/>
</dbReference>
<dbReference type="InterPro" id="IPR020904">
    <property type="entry name" value="Sc_DH/Rdtase_CS"/>
</dbReference>
<dbReference type="InterPro" id="IPR002347">
    <property type="entry name" value="SDR_fam"/>
</dbReference>
<dbReference type="NCBIfam" id="TIGR02415">
    <property type="entry name" value="23BDH"/>
    <property type="match status" value="1"/>
</dbReference>
<dbReference type="NCBIfam" id="NF005559">
    <property type="entry name" value="PRK07231.1"/>
    <property type="match status" value="1"/>
</dbReference>
<dbReference type="NCBIfam" id="NF006394">
    <property type="entry name" value="PRK08643.1"/>
    <property type="match status" value="1"/>
</dbReference>
<dbReference type="PANTHER" id="PTHR43639">
    <property type="entry name" value="OXIDOREDUCTASE, SHORT-CHAIN DEHYDROGENASE/REDUCTASE FAMILY (AFU_ORTHOLOGUE AFUA_5G02870)"/>
    <property type="match status" value="1"/>
</dbReference>
<dbReference type="PANTHER" id="PTHR43639:SF1">
    <property type="entry name" value="SHORT-CHAIN DEHYDROGENASE_REDUCTASE FAMILY PROTEIN"/>
    <property type="match status" value="1"/>
</dbReference>
<dbReference type="Pfam" id="PF00106">
    <property type="entry name" value="adh_short"/>
    <property type="match status" value="1"/>
</dbReference>
<dbReference type="PRINTS" id="PR00081">
    <property type="entry name" value="GDHRDH"/>
</dbReference>
<dbReference type="PRINTS" id="PR00080">
    <property type="entry name" value="SDRFAMILY"/>
</dbReference>
<dbReference type="SMART" id="SM00822">
    <property type="entry name" value="PKS_KR"/>
    <property type="match status" value="1"/>
</dbReference>
<dbReference type="SUPFAM" id="SSF51735">
    <property type="entry name" value="NAD(P)-binding Rossmann-fold domains"/>
    <property type="match status" value="1"/>
</dbReference>
<dbReference type="PROSITE" id="PS00061">
    <property type="entry name" value="ADH_SHORT"/>
    <property type="match status" value="1"/>
</dbReference>
<sequence>MTNNKVALVTGGAQGIGFKIAERLVEDGFKVAVVDFNEEGAKAAALKLSSDGTKAIAIKADVSNRDDVFNAVRQTAAQFGDFHVMVNNAGLGPTTPIDTITEEQFKTVYGVNVAGVLWGIQAAHEQFKKFNHGGKIINATSQAGVEGNPGLSLYCSTKFAVRGLTQVAAQDLASEGITVNAFAPGIVQTPMMESIAVATAEEAGKPEAWGWEQFTSQIALGRVSQPEDVSNVVSFLAGKDSDYITGQTIIVDGGMRFR</sequence>
<evidence type="ECO:0000250" key="1"/>
<evidence type="ECO:0000255" key="2">
    <source>
        <dbReference type="PROSITE-ProRule" id="PRU10001"/>
    </source>
</evidence>
<evidence type="ECO:0000305" key="3"/>
<accession>Q6GKH9</accession>
<protein>
    <recommendedName>
        <fullName>Diacetyl reductase [(S)-acetoin forming]</fullName>
        <ecNumber>1.1.1.304</ecNumber>
    </recommendedName>
    <alternativeName>
        <fullName>Acetoin(diacetyl) reductase</fullName>
        <shortName>AR</shortName>
    </alternativeName>
    <alternativeName>
        <fullName>Meso-2,3-butanediol dehydrogenase</fullName>
    </alternativeName>
</protein>
<feature type="chain" id="PRO_0000054542" description="Diacetyl reductase [(S)-acetoin forming]">
    <location>
        <begin position="1"/>
        <end position="258"/>
    </location>
</feature>
<feature type="active site" description="Proton acceptor" evidence="2">
    <location>
        <position position="154"/>
    </location>
</feature>
<feature type="active site" evidence="1">
    <location>
        <position position="158"/>
    </location>
</feature>
<feature type="binding site" evidence="1">
    <location>
        <begin position="8"/>
        <end position="32"/>
    </location>
    <ligand>
        <name>NAD(+)</name>
        <dbReference type="ChEBI" id="CHEBI:57540"/>
    </ligand>
</feature>
<feature type="binding site" evidence="1">
    <location>
        <position position="141"/>
    </location>
    <ligand>
        <name>substrate</name>
    </ligand>
</feature>